<comment type="subcellular location">
    <subcellularLocation>
        <location evidence="3">Plastid</location>
        <location evidence="3">Chloroplast membrane</location>
        <topology evidence="3">Multi-pass membrane protein</topology>
    </subcellularLocation>
</comment>
<comment type="similarity">
    <text evidence="3">Belongs to the GDT1 family.</text>
</comment>
<comment type="sequence caution" evidence="3">
    <conflict type="erroneous gene model prediction">
        <sequence resource="EMBL-CDS" id="EEC70197"/>
    </conflict>
</comment>
<proteinExistence type="inferred from homology"/>
<keyword id="KW-0150">Chloroplast</keyword>
<keyword id="KW-0472">Membrane</keyword>
<keyword id="KW-0934">Plastid</keyword>
<keyword id="KW-1185">Reference proteome</keyword>
<keyword id="KW-0809">Transit peptide</keyword>
<keyword id="KW-0812">Transmembrane</keyword>
<keyword id="KW-1133">Transmembrane helix</keyword>
<feature type="transit peptide" description="Chloroplast" evidence="1">
    <location>
        <begin position="1"/>
        <end position="57"/>
    </location>
</feature>
<feature type="chain" id="PRO_0000398769" description="GDT1-like protein 1, chloroplastic">
    <location>
        <begin position="58"/>
        <end position="341"/>
    </location>
</feature>
<feature type="transmembrane region" description="Helical" evidence="1">
    <location>
        <begin position="79"/>
        <end position="99"/>
    </location>
</feature>
<feature type="transmembrane region" description="Helical" evidence="1">
    <location>
        <begin position="117"/>
        <end position="137"/>
    </location>
</feature>
<feature type="transmembrane region" description="Helical" evidence="1">
    <location>
        <begin position="158"/>
        <end position="178"/>
    </location>
</feature>
<feature type="transmembrane region" description="Helical" evidence="1">
    <location>
        <begin position="203"/>
        <end position="223"/>
    </location>
</feature>
<feature type="transmembrane region" description="Helical" evidence="1">
    <location>
        <begin position="246"/>
        <end position="266"/>
    </location>
</feature>
<feature type="transmembrane region" description="Helical" evidence="1">
    <location>
        <begin position="286"/>
        <end position="306"/>
    </location>
</feature>
<feature type="transmembrane region" description="Helical" evidence="1">
    <location>
        <begin position="318"/>
        <end position="338"/>
    </location>
</feature>
<feature type="region of interest" description="Disordered" evidence="2">
    <location>
        <begin position="1"/>
        <end position="41"/>
    </location>
</feature>
<feature type="region of interest" description="Disordered" evidence="2">
    <location>
        <begin position="54"/>
        <end position="76"/>
    </location>
</feature>
<feature type="compositionally biased region" description="Low complexity" evidence="2">
    <location>
        <begin position="1"/>
        <end position="13"/>
    </location>
</feature>
<dbReference type="EMBL" id="CM000126">
    <property type="protein sequence ID" value="EEC70197.1"/>
    <property type="status" value="ALT_SEQ"/>
    <property type="molecule type" value="Genomic_DNA"/>
</dbReference>
<dbReference type="STRING" id="39946.B8AAM2"/>
<dbReference type="EnsemblPlants" id="OsLaMu_01g0008260.01">
    <property type="protein sequence ID" value="OsLaMu_01g0008260.01"/>
    <property type="gene ID" value="OsLaMu_01g0008260"/>
</dbReference>
<dbReference type="EnsemblPlants" id="OsMH63_01G008610_01">
    <property type="protein sequence ID" value="OsMH63_01G008610_01"/>
    <property type="gene ID" value="OsMH63_01G008610"/>
</dbReference>
<dbReference type="EnsemblPlants" id="OsMH63_01G008610_02">
    <property type="protein sequence ID" value="OsMH63_01G008610_02"/>
    <property type="gene ID" value="OsMH63_01G008610"/>
</dbReference>
<dbReference type="EnsemblPlants" id="OsZS97_01G008220_01">
    <property type="protein sequence ID" value="OsZS97_01G008220_01"/>
    <property type="gene ID" value="OsZS97_01G008220"/>
</dbReference>
<dbReference type="Gramene" id="OsLaMu_01g0008260.01">
    <property type="protein sequence ID" value="OsLaMu_01g0008260.01"/>
    <property type="gene ID" value="OsLaMu_01g0008260"/>
</dbReference>
<dbReference type="Gramene" id="OsMH63_01G008610_01">
    <property type="protein sequence ID" value="OsMH63_01G008610_01"/>
    <property type="gene ID" value="OsMH63_01G008610"/>
</dbReference>
<dbReference type="Gramene" id="OsMH63_01G008610_02">
    <property type="protein sequence ID" value="OsMH63_01G008610_02"/>
    <property type="gene ID" value="OsMH63_01G008610"/>
</dbReference>
<dbReference type="Gramene" id="OsZS97_01G008220_01">
    <property type="protein sequence ID" value="OsZS97_01G008220_01"/>
    <property type="gene ID" value="OsZS97_01G008220"/>
</dbReference>
<dbReference type="HOGENOM" id="CLU_050130_0_0_1"/>
<dbReference type="Proteomes" id="UP000007015">
    <property type="component" value="Chromosome 1"/>
</dbReference>
<dbReference type="GO" id="GO:0031969">
    <property type="term" value="C:chloroplast membrane"/>
    <property type="evidence" value="ECO:0007669"/>
    <property type="project" value="UniProtKB-SubCell"/>
</dbReference>
<dbReference type="GO" id="GO:0009535">
    <property type="term" value="C:chloroplast thylakoid membrane"/>
    <property type="evidence" value="ECO:0007669"/>
    <property type="project" value="TreeGrafter"/>
</dbReference>
<dbReference type="GO" id="GO:0005794">
    <property type="term" value="C:Golgi apparatus"/>
    <property type="evidence" value="ECO:0007669"/>
    <property type="project" value="TreeGrafter"/>
</dbReference>
<dbReference type="GO" id="GO:0015085">
    <property type="term" value="F:calcium ion transmembrane transporter activity"/>
    <property type="evidence" value="ECO:0007669"/>
    <property type="project" value="TreeGrafter"/>
</dbReference>
<dbReference type="GO" id="GO:0005384">
    <property type="term" value="F:manganese ion transmembrane transporter activity"/>
    <property type="evidence" value="ECO:0007669"/>
    <property type="project" value="TreeGrafter"/>
</dbReference>
<dbReference type="GO" id="GO:0032468">
    <property type="term" value="P:Golgi calcium ion homeostasis"/>
    <property type="evidence" value="ECO:0007669"/>
    <property type="project" value="TreeGrafter"/>
</dbReference>
<dbReference type="GO" id="GO:0032472">
    <property type="term" value="P:Golgi calcium ion transport"/>
    <property type="evidence" value="ECO:0007669"/>
    <property type="project" value="TreeGrafter"/>
</dbReference>
<dbReference type="InterPro" id="IPR001727">
    <property type="entry name" value="GDT1-like"/>
</dbReference>
<dbReference type="PANTHER" id="PTHR12608:SF6">
    <property type="entry name" value="PROTEIN PAM71, CHLOROPLASTIC"/>
    <property type="match status" value="1"/>
</dbReference>
<dbReference type="PANTHER" id="PTHR12608">
    <property type="entry name" value="TRANSMEMBRANE PROTEIN HTP-1 RELATED"/>
    <property type="match status" value="1"/>
</dbReference>
<dbReference type="Pfam" id="PF01169">
    <property type="entry name" value="GDT1"/>
    <property type="match status" value="2"/>
</dbReference>
<organism>
    <name type="scientific">Oryza sativa subsp. indica</name>
    <name type="common">Rice</name>
    <dbReference type="NCBI Taxonomy" id="39946"/>
    <lineage>
        <taxon>Eukaryota</taxon>
        <taxon>Viridiplantae</taxon>
        <taxon>Streptophyta</taxon>
        <taxon>Embryophyta</taxon>
        <taxon>Tracheophyta</taxon>
        <taxon>Spermatophyta</taxon>
        <taxon>Magnoliopsida</taxon>
        <taxon>Liliopsida</taxon>
        <taxon>Poales</taxon>
        <taxon>Poaceae</taxon>
        <taxon>BOP clade</taxon>
        <taxon>Oryzoideae</taxon>
        <taxon>Oryzeae</taxon>
        <taxon>Oryzinae</taxon>
        <taxon>Oryza</taxon>
        <taxon>Oryza sativa</taxon>
    </lineage>
</organism>
<reference key="1">
    <citation type="journal article" date="2005" name="PLoS Biol.">
        <title>The genomes of Oryza sativa: a history of duplications.</title>
        <authorList>
            <person name="Yu J."/>
            <person name="Wang J."/>
            <person name="Lin W."/>
            <person name="Li S."/>
            <person name="Li H."/>
            <person name="Zhou J."/>
            <person name="Ni P."/>
            <person name="Dong W."/>
            <person name="Hu S."/>
            <person name="Zeng C."/>
            <person name="Zhang J."/>
            <person name="Zhang Y."/>
            <person name="Li R."/>
            <person name="Xu Z."/>
            <person name="Li S."/>
            <person name="Li X."/>
            <person name="Zheng H."/>
            <person name="Cong L."/>
            <person name="Lin L."/>
            <person name="Yin J."/>
            <person name="Geng J."/>
            <person name="Li G."/>
            <person name="Shi J."/>
            <person name="Liu J."/>
            <person name="Lv H."/>
            <person name="Li J."/>
            <person name="Wang J."/>
            <person name="Deng Y."/>
            <person name="Ran L."/>
            <person name="Shi X."/>
            <person name="Wang X."/>
            <person name="Wu Q."/>
            <person name="Li C."/>
            <person name="Ren X."/>
            <person name="Wang J."/>
            <person name="Wang X."/>
            <person name="Li D."/>
            <person name="Liu D."/>
            <person name="Zhang X."/>
            <person name="Ji Z."/>
            <person name="Zhao W."/>
            <person name="Sun Y."/>
            <person name="Zhang Z."/>
            <person name="Bao J."/>
            <person name="Han Y."/>
            <person name="Dong L."/>
            <person name="Ji J."/>
            <person name="Chen P."/>
            <person name="Wu S."/>
            <person name="Liu J."/>
            <person name="Xiao Y."/>
            <person name="Bu D."/>
            <person name="Tan J."/>
            <person name="Yang L."/>
            <person name="Ye C."/>
            <person name="Zhang J."/>
            <person name="Xu J."/>
            <person name="Zhou Y."/>
            <person name="Yu Y."/>
            <person name="Zhang B."/>
            <person name="Zhuang S."/>
            <person name="Wei H."/>
            <person name="Liu B."/>
            <person name="Lei M."/>
            <person name="Yu H."/>
            <person name="Li Y."/>
            <person name="Xu H."/>
            <person name="Wei S."/>
            <person name="He X."/>
            <person name="Fang L."/>
            <person name="Zhang Z."/>
            <person name="Zhang Y."/>
            <person name="Huang X."/>
            <person name="Su Z."/>
            <person name="Tong W."/>
            <person name="Li J."/>
            <person name="Tong Z."/>
            <person name="Li S."/>
            <person name="Ye J."/>
            <person name="Wang L."/>
            <person name="Fang L."/>
            <person name="Lei T."/>
            <person name="Chen C.-S."/>
            <person name="Chen H.-C."/>
            <person name="Xu Z."/>
            <person name="Li H."/>
            <person name="Huang H."/>
            <person name="Zhang F."/>
            <person name="Xu H."/>
            <person name="Li N."/>
            <person name="Zhao C."/>
            <person name="Li S."/>
            <person name="Dong L."/>
            <person name="Huang Y."/>
            <person name="Li L."/>
            <person name="Xi Y."/>
            <person name="Qi Q."/>
            <person name="Li W."/>
            <person name="Zhang B."/>
            <person name="Hu W."/>
            <person name="Zhang Y."/>
            <person name="Tian X."/>
            <person name="Jiao Y."/>
            <person name="Liang X."/>
            <person name="Jin J."/>
            <person name="Gao L."/>
            <person name="Zheng W."/>
            <person name="Hao B."/>
            <person name="Liu S.-M."/>
            <person name="Wang W."/>
            <person name="Yuan L."/>
            <person name="Cao M."/>
            <person name="McDermott J."/>
            <person name="Samudrala R."/>
            <person name="Wang J."/>
            <person name="Wong G.K.-S."/>
            <person name="Yang H."/>
        </authorList>
    </citation>
    <scope>NUCLEOTIDE SEQUENCE [LARGE SCALE GENOMIC DNA]</scope>
    <source>
        <strain>cv. 93-11</strain>
    </source>
</reference>
<accession>B8AAM2</accession>
<gene>
    <name type="ORF">OsI_00941</name>
</gene>
<name>GDT11_ORYSI</name>
<evidence type="ECO:0000255" key="1"/>
<evidence type="ECO:0000256" key="2">
    <source>
        <dbReference type="SAM" id="MobiDB-lite"/>
    </source>
</evidence>
<evidence type="ECO:0000305" key="3"/>
<protein>
    <recommendedName>
        <fullName>GDT1-like protein 1, chloroplastic</fullName>
    </recommendedName>
</protein>
<sequence length="341" mass="35001">MASVASSTVFASSLPHHRATTRAPPTPPRIPRRARLPGRSVVSCLPKRGSEKLVVTRASDEEGPPEPAGQGRGGGRAWPSLDASSCGLALAAAAGVLMLQGSQQALAGTEFMGMQDVVGDLGDISTGFASAFLLIFFSELGDRTFFIAALLAARNSGAIIFLGTFGALAVMTIISVVLGRAFHYVDGIIPFSFGGTDFPVDDFLAACLLVYYGVTTLLDAASGDEEKMNEEQEEAELAVSKFLGNGAGIISAASTIASTFVLVFIAEWGDKSFFSTIALAAASSPLGVIAGSLAGHAVATLIAVLGGSLLGTFLSEKIVAYIGGSLFLAFAAVTLVEIVNS</sequence>